<dbReference type="EMBL" id="AE003852">
    <property type="protein sequence ID" value="AAF94301.1"/>
    <property type="molecule type" value="Genomic_DNA"/>
</dbReference>
<dbReference type="PIR" id="C82236">
    <property type="entry name" value="C82236"/>
</dbReference>
<dbReference type="RefSeq" id="NP_230787.1">
    <property type="nucleotide sequence ID" value="NC_002505.1"/>
</dbReference>
<dbReference type="SMR" id="Q9KSW4"/>
<dbReference type="STRING" id="243277.VC_1142"/>
<dbReference type="DNASU" id="2614575"/>
<dbReference type="EnsemblBacteria" id="AAF94301">
    <property type="protein sequence ID" value="AAF94301"/>
    <property type="gene ID" value="VC_1142"/>
</dbReference>
<dbReference type="KEGG" id="vch:VC_1142"/>
<dbReference type="PATRIC" id="fig|243277.26.peg.1091"/>
<dbReference type="eggNOG" id="COG1278">
    <property type="taxonomic scope" value="Bacteria"/>
</dbReference>
<dbReference type="HOGENOM" id="CLU_117621_0_2_6"/>
<dbReference type="Proteomes" id="UP000000584">
    <property type="component" value="Chromosome 1"/>
</dbReference>
<dbReference type="GO" id="GO:0005829">
    <property type="term" value="C:cytosol"/>
    <property type="evidence" value="ECO:0007669"/>
    <property type="project" value="UniProtKB-ARBA"/>
</dbReference>
<dbReference type="GO" id="GO:0003677">
    <property type="term" value="F:DNA binding"/>
    <property type="evidence" value="ECO:0007669"/>
    <property type="project" value="UniProtKB-KW"/>
</dbReference>
<dbReference type="GO" id="GO:0003676">
    <property type="term" value="F:nucleic acid binding"/>
    <property type="evidence" value="ECO:0000318"/>
    <property type="project" value="GO_Central"/>
</dbReference>
<dbReference type="GO" id="GO:0006355">
    <property type="term" value="P:regulation of DNA-templated transcription"/>
    <property type="evidence" value="ECO:0007669"/>
    <property type="project" value="InterPro"/>
</dbReference>
<dbReference type="GO" id="GO:0010468">
    <property type="term" value="P:regulation of gene expression"/>
    <property type="evidence" value="ECO:0000318"/>
    <property type="project" value="GO_Central"/>
</dbReference>
<dbReference type="CDD" id="cd04458">
    <property type="entry name" value="CSP_CDS"/>
    <property type="match status" value="1"/>
</dbReference>
<dbReference type="FunFam" id="2.40.50.140:FF:000006">
    <property type="entry name" value="Cold shock protein CspC"/>
    <property type="match status" value="1"/>
</dbReference>
<dbReference type="Gene3D" id="2.40.50.140">
    <property type="entry name" value="Nucleic acid-binding proteins"/>
    <property type="match status" value="1"/>
</dbReference>
<dbReference type="InterPro" id="IPR012156">
    <property type="entry name" value="Cold_shock_CspA"/>
</dbReference>
<dbReference type="InterPro" id="IPR011129">
    <property type="entry name" value="CSD"/>
</dbReference>
<dbReference type="InterPro" id="IPR019844">
    <property type="entry name" value="CSD_CS"/>
</dbReference>
<dbReference type="InterPro" id="IPR002059">
    <property type="entry name" value="CSP_DNA-bd"/>
</dbReference>
<dbReference type="InterPro" id="IPR012751">
    <property type="entry name" value="CspD"/>
</dbReference>
<dbReference type="InterPro" id="IPR012340">
    <property type="entry name" value="NA-bd_OB-fold"/>
</dbReference>
<dbReference type="NCBIfam" id="TIGR02381">
    <property type="entry name" value="cspD"/>
    <property type="match status" value="1"/>
</dbReference>
<dbReference type="PANTHER" id="PTHR46565">
    <property type="entry name" value="COLD SHOCK DOMAIN PROTEIN 2"/>
    <property type="match status" value="1"/>
</dbReference>
<dbReference type="PANTHER" id="PTHR46565:SF5">
    <property type="entry name" value="COLD SHOCK PROTEIN 2-LIKE"/>
    <property type="match status" value="1"/>
</dbReference>
<dbReference type="Pfam" id="PF00313">
    <property type="entry name" value="CSD"/>
    <property type="match status" value="1"/>
</dbReference>
<dbReference type="PIRSF" id="PIRSF002599">
    <property type="entry name" value="Cold_shock_A"/>
    <property type="match status" value="1"/>
</dbReference>
<dbReference type="PRINTS" id="PR00050">
    <property type="entry name" value="COLDSHOCK"/>
</dbReference>
<dbReference type="SMART" id="SM00357">
    <property type="entry name" value="CSP"/>
    <property type="match status" value="1"/>
</dbReference>
<dbReference type="SUPFAM" id="SSF50249">
    <property type="entry name" value="Nucleic acid-binding proteins"/>
    <property type="match status" value="1"/>
</dbReference>
<dbReference type="PROSITE" id="PS00352">
    <property type="entry name" value="CSD_1"/>
    <property type="match status" value="1"/>
</dbReference>
<dbReference type="PROSITE" id="PS51857">
    <property type="entry name" value="CSD_2"/>
    <property type="match status" value="1"/>
</dbReference>
<name>CSPD_VIBCH</name>
<keyword id="KW-0010">Activator</keyword>
<keyword id="KW-0963">Cytoplasm</keyword>
<keyword id="KW-0238">DNA-binding</keyword>
<keyword id="KW-1185">Reference proteome</keyword>
<keyword id="KW-0804">Transcription</keyword>
<keyword id="KW-0805">Transcription regulation</keyword>
<comment type="subcellular location">
    <subcellularLocation>
        <location evidence="1">Cytoplasm</location>
    </subcellularLocation>
</comment>
<reference key="1">
    <citation type="journal article" date="2000" name="Nature">
        <title>DNA sequence of both chromosomes of the cholera pathogen Vibrio cholerae.</title>
        <authorList>
            <person name="Heidelberg J.F."/>
            <person name="Eisen J.A."/>
            <person name="Nelson W.C."/>
            <person name="Clayton R.A."/>
            <person name="Gwinn M.L."/>
            <person name="Dodson R.J."/>
            <person name="Haft D.H."/>
            <person name="Hickey E.K."/>
            <person name="Peterson J.D."/>
            <person name="Umayam L.A."/>
            <person name="Gill S.R."/>
            <person name="Nelson K.E."/>
            <person name="Read T.D."/>
            <person name="Tettelin H."/>
            <person name="Richardson D.L."/>
            <person name="Ermolaeva M.D."/>
            <person name="Vamathevan J.J."/>
            <person name="Bass S."/>
            <person name="Qin H."/>
            <person name="Dragoi I."/>
            <person name="Sellers P."/>
            <person name="McDonald L.A."/>
            <person name="Utterback T.R."/>
            <person name="Fleischmann R.D."/>
            <person name="Nierman W.C."/>
            <person name="White O."/>
            <person name="Salzberg S.L."/>
            <person name="Smith H.O."/>
            <person name="Colwell R.R."/>
            <person name="Mekalanos J.J."/>
            <person name="Venter J.C."/>
            <person name="Fraser C.M."/>
        </authorList>
    </citation>
    <scope>NUCLEOTIDE SEQUENCE [LARGE SCALE GENOMIC DNA]</scope>
    <source>
        <strain>ATCC 39315 / El Tor Inaba N16961</strain>
    </source>
</reference>
<accession>Q9KSW4</accession>
<organism>
    <name type="scientific">Vibrio cholerae serotype O1 (strain ATCC 39315 / El Tor Inaba N16961)</name>
    <dbReference type="NCBI Taxonomy" id="243277"/>
    <lineage>
        <taxon>Bacteria</taxon>
        <taxon>Pseudomonadati</taxon>
        <taxon>Pseudomonadota</taxon>
        <taxon>Gammaproteobacteria</taxon>
        <taxon>Vibrionales</taxon>
        <taxon>Vibrionaceae</taxon>
        <taxon>Vibrio</taxon>
    </lineage>
</organism>
<feature type="chain" id="PRO_0000100341" description="Cold shock-like protein CspD">
    <location>
        <begin position="1"/>
        <end position="76"/>
    </location>
</feature>
<feature type="domain" description="CSD">
    <location>
        <begin position="7"/>
        <end position="67"/>
    </location>
</feature>
<protein>
    <recommendedName>
        <fullName>Cold shock-like protein CspD</fullName>
    </recommendedName>
</protein>
<sequence>MYSMATGTVKWFNNAKGFGFICPEGEDGDIFAHYSTIQMDGYRTLKAGQQVSYQVEQGPKGYHASCVVPIEGQSAK</sequence>
<proteinExistence type="inferred from homology"/>
<gene>
    <name type="primary">cspD</name>
    <name type="ordered locus">VC_1142</name>
</gene>
<evidence type="ECO:0000250" key="1"/>